<protein>
    <recommendedName>
        <fullName evidence="1">Release factor glutamine methyltransferase</fullName>
        <shortName evidence="1">RF MTase</shortName>
        <ecNumber evidence="1">2.1.1.297</ecNumber>
    </recommendedName>
    <alternativeName>
        <fullName evidence="1">N5-glutamine methyltransferase PrmC</fullName>
    </alternativeName>
    <alternativeName>
        <fullName evidence="1">Protein-(glutamine-N5) MTase PrmC</fullName>
    </alternativeName>
    <alternativeName>
        <fullName evidence="1">Protein-glutamine N-methyltransferase PrmC</fullName>
    </alternativeName>
</protein>
<organism>
    <name type="scientific">Moorella thermoacetica (strain ATCC 39073 / JCM 9320)</name>
    <dbReference type="NCBI Taxonomy" id="264732"/>
    <lineage>
        <taxon>Bacteria</taxon>
        <taxon>Bacillati</taxon>
        <taxon>Bacillota</taxon>
        <taxon>Clostridia</taxon>
        <taxon>Moorellales</taxon>
        <taxon>Moorellaceae</taxon>
        <taxon>Moorella</taxon>
    </lineage>
</organism>
<sequence length="283" mass="30475">MTLRQALGEAVRRLAAGGVERPRLEAEVLLGWACSLTRPRLLARLEEELAPAAAGRFWQAIDRRAAGYPLQYLTGHQEFMSLDFKVTPAVLIPRQDTEVVVEAVLERLDPCESYTIADCGTGSGAIALSLAHYLPRARVYATDISPAALTVAQENARKLGLAARVTLLQGDFLAPLRGLKLDALVANPPYIPTAALPGLPADVRSEPRLALDGGPDGLDAYRFLLPGAAGLLRPGGLLALEIGSDQGQAVKDLARAVGAYRNEQVLPDYAGRDRCFLAYRREE</sequence>
<name>PRMC_MOOTA</name>
<dbReference type="EC" id="2.1.1.297" evidence="1"/>
<dbReference type="EMBL" id="CP000232">
    <property type="protein sequence ID" value="ABC20678.1"/>
    <property type="molecule type" value="Genomic_DNA"/>
</dbReference>
<dbReference type="RefSeq" id="YP_431221.1">
    <property type="nucleotide sequence ID" value="NC_007644.1"/>
</dbReference>
<dbReference type="SMR" id="Q2RFW1"/>
<dbReference type="STRING" id="264732.Moth_2396"/>
<dbReference type="EnsemblBacteria" id="ABC20678">
    <property type="protein sequence ID" value="ABC20678"/>
    <property type="gene ID" value="Moth_2396"/>
</dbReference>
<dbReference type="KEGG" id="mta:Moth_2396"/>
<dbReference type="PATRIC" id="fig|264732.11.peg.2609"/>
<dbReference type="eggNOG" id="COG2890">
    <property type="taxonomic scope" value="Bacteria"/>
</dbReference>
<dbReference type="HOGENOM" id="CLU_018398_3_1_9"/>
<dbReference type="OrthoDB" id="9784805at2"/>
<dbReference type="GO" id="GO:0003676">
    <property type="term" value="F:nucleic acid binding"/>
    <property type="evidence" value="ECO:0007669"/>
    <property type="project" value="InterPro"/>
</dbReference>
<dbReference type="GO" id="GO:0102559">
    <property type="term" value="F:protein-(glutamine-N5) methyltransferase activity"/>
    <property type="evidence" value="ECO:0007669"/>
    <property type="project" value="UniProtKB-EC"/>
</dbReference>
<dbReference type="GO" id="GO:0036009">
    <property type="term" value="F:protein-glutamine N-methyltransferase activity"/>
    <property type="evidence" value="ECO:0007669"/>
    <property type="project" value="UniProtKB-UniRule"/>
</dbReference>
<dbReference type="GO" id="GO:0032259">
    <property type="term" value="P:methylation"/>
    <property type="evidence" value="ECO:0007669"/>
    <property type="project" value="UniProtKB-KW"/>
</dbReference>
<dbReference type="CDD" id="cd02440">
    <property type="entry name" value="AdoMet_MTases"/>
    <property type="match status" value="1"/>
</dbReference>
<dbReference type="Gene3D" id="1.10.8.10">
    <property type="entry name" value="DNA helicase RuvA subunit, C-terminal domain"/>
    <property type="match status" value="1"/>
</dbReference>
<dbReference type="Gene3D" id="3.40.50.150">
    <property type="entry name" value="Vaccinia Virus protein VP39"/>
    <property type="match status" value="1"/>
</dbReference>
<dbReference type="HAMAP" id="MF_02126">
    <property type="entry name" value="RF_methyltr_PrmC"/>
    <property type="match status" value="1"/>
</dbReference>
<dbReference type="InterPro" id="IPR002052">
    <property type="entry name" value="DNA_methylase_N6_adenine_CS"/>
</dbReference>
<dbReference type="InterPro" id="IPR004556">
    <property type="entry name" value="HemK-like"/>
</dbReference>
<dbReference type="InterPro" id="IPR050320">
    <property type="entry name" value="N5-glutamine_MTase"/>
</dbReference>
<dbReference type="InterPro" id="IPR040758">
    <property type="entry name" value="PrmC_N"/>
</dbReference>
<dbReference type="InterPro" id="IPR019874">
    <property type="entry name" value="RF_methyltr_PrmC"/>
</dbReference>
<dbReference type="InterPro" id="IPR029063">
    <property type="entry name" value="SAM-dependent_MTases_sf"/>
</dbReference>
<dbReference type="InterPro" id="IPR007848">
    <property type="entry name" value="Small_mtfrase_dom"/>
</dbReference>
<dbReference type="NCBIfam" id="TIGR00536">
    <property type="entry name" value="hemK_fam"/>
    <property type="match status" value="1"/>
</dbReference>
<dbReference type="NCBIfam" id="TIGR03534">
    <property type="entry name" value="RF_mod_PrmC"/>
    <property type="match status" value="1"/>
</dbReference>
<dbReference type="PANTHER" id="PTHR18895">
    <property type="entry name" value="HEMK METHYLTRANSFERASE"/>
    <property type="match status" value="1"/>
</dbReference>
<dbReference type="PANTHER" id="PTHR18895:SF74">
    <property type="entry name" value="MTRF1L RELEASE FACTOR GLUTAMINE METHYLTRANSFERASE"/>
    <property type="match status" value="1"/>
</dbReference>
<dbReference type="Pfam" id="PF05175">
    <property type="entry name" value="MTS"/>
    <property type="match status" value="1"/>
</dbReference>
<dbReference type="Pfam" id="PF17827">
    <property type="entry name" value="PrmC_N"/>
    <property type="match status" value="1"/>
</dbReference>
<dbReference type="SUPFAM" id="SSF53335">
    <property type="entry name" value="S-adenosyl-L-methionine-dependent methyltransferases"/>
    <property type="match status" value="1"/>
</dbReference>
<reference key="1">
    <citation type="journal article" date="2008" name="Environ. Microbiol.">
        <title>The complete genome sequence of Moorella thermoacetica (f. Clostridium thermoaceticum).</title>
        <authorList>
            <person name="Pierce E."/>
            <person name="Xie G."/>
            <person name="Barabote R.D."/>
            <person name="Saunders E."/>
            <person name="Han C.S."/>
            <person name="Detter J.C."/>
            <person name="Richardson P."/>
            <person name="Brettin T.S."/>
            <person name="Das A."/>
            <person name="Ljungdahl L.G."/>
            <person name="Ragsdale S.W."/>
        </authorList>
    </citation>
    <scope>NUCLEOTIDE SEQUENCE [LARGE SCALE GENOMIC DNA]</scope>
    <source>
        <strain>ATCC 39073 / JCM 9320</strain>
    </source>
</reference>
<feature type="chain" id="PRO_0000414531" description="Release factor glutamine methyltransferase">
    <location>
        <begin position="1"/>
        <end position="283"/>
    </location>
</feature>
<feature type="binding site" evidence="1">
    <location>
        <begin position="120"/>
        <end position="124"/>
    </location>
    <ligand>
        <name>S-adenosyl-L-methionine</name>
        <dbReference type="ChEBI" id="CHEBI:59789"/>
    </ligand>
</feature>
<feature type="binding site" evidence="1">
    <location>
        <position position="143"/>
    </location>
    <ligand>
        <name>S-adenosyl-L-methionine</name>
        <dbReference type="ChEBI" id="CHEBI:59789"/>
    </ligand>
</feature>
<feature type="binding site" evidence="1">
    <location>
        <position position="172"/>
    </location>
    <ligand>
        <name>S-adenosyl-L-methionine</name>
        <dbReference type="ChEBI" id="CHEBI:59789"/>
    </ligand>
</feature>
<feature type="binding site" evidence="1">
    <location>
        <begin position="187"/>
        <end position="190"/>
    </location>
    <ligand>
        <name>substrate</name>
    </ligand>
</feature>
<feature type="binding site" evidence="1">
    <location>
        <position position="187"/>
    </location>
    <ligand>
        <name>S-adenosyl-L-methionine</name>
        <dbReference type="ChEBI" id="CHEBI:59789"/>
    </ligand>
</feature>
<proteinExistence type="inferred from homology"/>
<evidence type="ECO:0000255" key="1">
    <source>
        <dbReference type="HAMAP-Rule" id="MF_02126"/>
    </source>
</evidence>
<keyword id="KW-0489">Methyltransferase</keyword>
<keyword id="KW-0949">S-adenosyl-L-methionine</keyword>
<keyword id="KW-0808">Transferase</keyword>
<comment type="function">
    <text evidence="1">Methylates the class 1 translation termination release factors RF1/PrfA and RF2/PrfB on the glutamine residue of the universally conserved GGQ motif.</text>
</comment>
<comment type="catalytic activity">
    <reaction evidence="1">
        <text>L-glutaminyl-[peptide chain release factor] + S-adenosyl-L-methionine = N(5)-methyl-L-glutaminyl-[peptide chain release factor] + S-adenosyl-L-homocysteine + H(+)</text>
        <dbReference type="Rhea" id="RHEA:42896"/>
        <dbReference type="Rhea" id="RHEA-COMP:10271"/>
        <dbReference type="Rhea" id="RHEA-COMP:10272"/>
        <dbReference type="ChEBI" id="CHEBI:15378"/>
        <dbReference type="ChEBI" id="CHEBI:30011"/>
        <dbReference type="ChEBI" id="CHEBI:57856"/>
        <dbReference type="ChEBI" id="CHEBI:59789"/>
        <dbReference type="ChEBI" id="CHEBI:61891"/>
        <dbReference type="EC" id="2.1.1.297"/>
    </reaction>
</comment>
<comment type="similarity">
    <text evidence="1">Belongs to the protein N5-glutamine methyltransferase family. PrmC subfamily.</text>
</comment>
<accession>Q2RFW1</accession>
<gene>
    <name evidence="1" type="primary">prmC</name>
    <name type="ordered locus">Moth_2396</name>
</gene>